<feature type="chain" id="PRO_0000083011" description="Methionyl-tRNA formyltransferase">
    <location>
        <begin position="1"/>
        <end position="314"/>
    </location>
</feature>
<feature type="binding site" evidence="1">
    <location>
        <begin position="113"/>
        <end position="116"/>
    </location>
    <ligand>
        <name>(6S)-5,6,7,8-tetrahydrofolate</name>
        <dbReference type="ChEBI" id="CHEBI:57453"/>
    </ligand>
</feature>
<dbReference type="EC" id="2.1.2.9" evidence="1"/>
<dbReference type="EMBL" id="CR378674">
    <property type="protein sequence ID" value="CAG21836.1"/>
    <property type="molecule type" value="Genomic_DNA"/>
</dbReference>
<dbReference type="RefSeq" id="WP_011220072.1">
    <property type="nucleotide sequence ID" value="NC_006370.1"/>
</dbReference>
<dbReference type="SMR" id="Q6LLJ2"/>
<dbReference type="STRING" id="298386.PBPRA3580"/>
<dbReference type="KEGG" id="ppr:PBPRA3580"/>
<dbReference type="eggNOG" id="COG0223">
    <property type="taxonomic scope" value="Bacteria"/>
</dbReference>
<dbReference type="HOGENOM" id="CLU_033347_1_2_6"/>
<dbReference type="Proteomes" id="UP000000593">
    <property type="component" value="Chromosome 1"/>
</dbReference>
<dbReference type="GO" id="GO:0005829">
    <property type="term" value="C:cytosol"/>
    <property type="evidence" value="ECO:0007669"/>
    <property type="project" value="TreeGrafter"/>
</dbReference>
<dbReference type="GO" id="GO:0004479">
    <property type="term" value="F:methionyl-tRNA formyltransferase activity"/>
    <property type="evidence" value="ECO:0007669"/>
    <property type="project" value="UniProtKB-UniRule"/>
</dbReference>
<dbReference type="CDD" id="cd08646">
    <property type="entry name" value="FMT_core_Met-tRNA-FMT_N"/>
    <property type="match status" value="1"/>
</dbReference>
<dbReference type="CDD" id="cd08704">
    <property type="entry name" value="Met_tRNA_FMT_C"/>
    <property type="match status" value="1"/>
</dbReference>
<dbReference type="FunFam" id="3.40.50.170:FF:000003">
    <property type="entry name" value="Methionyl-tRNA formyltransferase"/>
    <property type="match status" value="1"/>
</dbReference>
<dbReference type="Gene3D" id="3.10.25.10">
    <property type="entry name" value="Formyl transferase, C-terminal domain"/>
    <property type="match status" value="1"/>
</dbReference>
<dbReference type="Gene3D" id="3.40.50.170">
    <property type="entry name" value="Formyl transferase, N-terminal domain"/>
    <property type="match status" value="1"/>
</dbReference>
<dbReference type="HAMAP" id="MF_00182">
    <property type="entry name" value="Formyl_trans"/>
    <property type="match status" value="1"/>
</dbReference>
<dbReference type="InterPro" id="IPR005794">
    <property type="entry name" value="Fmt"/>
</dbReference>
<dbReference type="InterPro" id="IPR005793">
    <property type="entry name" value="Formyl_trans_C"/>
</dbReference>
<dbReference type="InterPro" id="IPR037022">
    <property type="entry name" value="Formyl_trans_C_sf"/>
</dbReference>
<dbReference type="InterPro" id="IPR002376">
    <property type="entry name" value="Formyl_transf_N"/>
</dbReference>
<dbReference type="InterPro" id="IPR036477">
    <property type="entry name" value="Formyl_transf_N_sf"/>
</dbReference>
<dbReference type="InterPro" id="IPR011034">
    <property type="entry name" value="Formyl_transferase-like_C_sf"/>
</dbReference>
<dbReference type="InterPro" id="IPR001555">
    <property type="entry name" value="GART_AS"/>
</dbReference>
<dbReference type="InterPro" id="IPR044135">
    <property type="entry name" value="Met-tRNA-FMT_C"/>
</dbReference>
<dbReference type="InterPro" id="IPR041711">
    <property type="entry name" value="Met-tRNA-FMT_N"/>
</dbReference>
<dbReference type="NCBIfam" id="TIGR00460">
    <property type="entry name" value="fmt"/>
    <property type="match status" value="1"/>
</dbReference>
<dbReference type="PANTHER" id="PTHR11138">
    <property type="entry name" value="METHIONYL-TRNA FORMYLTRANSFERASE"/>
    <property type="match status" value="1"/>
</dbReference>
<dbReference type="PANTHER" id="PTHR11138:SF5">
    <property type="entry name" value="METHIONYL-TRNA FORMYLTRANSFERASE, MITOCHONDRIAL"/>
    <property type="match status" value="1"/>
</dbReference>
<dbReference type="Pfam" id="PF02911">
    <property type="entry name" value="Formyl_trans_C"/>
    <property type="match status" value="1"/>
</dbReference>
<dbReference type="Pfam" id="PF00551">
    <property type="entry name" value="Formyl_trans_N"/>
    <property type="match status" value="1"/>
</dbReference>
<dbReference type="SUPFAM" id="SSF50486">
    <property type="entry name" value="FMT C-terminal domain-like"/>
    <property type="match status" value="1"/>
</dbReference>
<dbReference type="SUPFAM" id="SSF53328">
    <property type="entry name" value="Formyltransferase"/>
    <property type="match status" value="1"/>
</dbReference>
<dbReference type="PROSITE" id="PS00373">
    <property type="entry name" value="GART"/>
    <property type="match status" value="1"/>
</dbReference>
<keyword id="KW-0648">Protein biosynthesis</keyword>
<keyword id="KW-1185">Reference proteome</keyword>
<keyword id="KW-0808">Transferase</keyword>
<name>FMT_PHOPR</name>
<comment type="function">
    <text evidence="1">Attaches a formyl group to the free amino group of methionyl-tRNA(fMet). The formyl group appears to play a dual role in the initiator identity of N-formylmethionyl-tRNA by promoting its recognition by IF2 and preventing the misappropriation of this tRNA by the elongation apparatus.</text>
</comment>
<comment type="catalytic activity">
    <reaction evidence="1">
        <text>L-methionyl-tRNA(fMet) + (6R)-10-formyltetrahydrofolate = N-formyl-L-methionyl-tRNA(fMet) + (6S)-5,6,7,8-tetrahydrofolate + H(+)</text>
        <dbReference type="Rhea" id="RHEA:24380"/>
        <dbReference type="Rhea" id="RHEA-COMP:9952"/>
        <dbReference type="Rhea" id="RHEA-COMP:9953"/>
        <dbReference type="ChEBI" id="CHEBI:15378"/>
        <dbReference type="ChEBI" id="CHEBI:57453"/>
        <dbReference type="ChEBI" id="CHEBI:78530"/>
        <dbReference type="ChEBI" id="CHEBI:78844"/>
        <dbReference type="ChEBI" id="CHEBI:195366"/>
        <dbReference type="EC" id="2.1.2.9"/>
    </reaction>
</comment>
<comment type="similarity">
    <text evidence="1">Belongs to the Fmt family.</text>
</comment>
<protein>
    <recommendedName>
        <fullName evidence="1">Methionyl-tRNA formyltransferase</fullName>
        <ecNumber evidence="1">2.1.2.9</ecNumber>
    </recommendedName>
</protein>
<proteinExistence type="inferred from homology"/>
<accession>Q6LLJ2</accession>
<organism>
    <name type="scientific">Photobacterium profundum (strain SS9)</name>
    <dbReference type="NCBI Taxonomy" id="298386"/>
    <lineage>
        <taxon>Bacteria</taxon>
        <taxon>Pseudomonadati</taxon>
        <taxon>Pseudomonadota</taxon>
        <taxon>Gammaproteobacteria</taxon>
        <taxon>Vibrionales</taxon>
        <taxon>Vibrionaceae</taxon>
        <taxon>Photobacterium</taxon>
    </lineage>
</organism>
<evidence type="ECO:0000255" key="1">
    <source>
        <dbReference type="HAMAP-Rule" id="MF_00182"/>
    </source>
</evidence>
<gene>
    <name evidence="1" type="primary">fmt</name>
    <name type="ordered locus">PBPRA3580</name>
</gene>
<reference key="1">
    <citation type="journal article" date="2005" name="Science">
        <title>Life at depth: Photobacterium profundum genome sequence and expression analysis.</title>
        <authorList>
            <person name="Vezzi A."/>
            <person name="Campanaro S."/>
            <person name="D'Angelo M."/>
            <person name="Simonato F."/>
            <person name="Vitulo N."/>
            <person name="Lauro F.M."/>
            <person name="Cestaro A."/>
            <person name="Malacrida G."/>
            <person name="Simionati B."/>
            <person name="Cannata N."/>
            <person name="Romualdi C."/>
            <person name="Bartlett D.H."/>
            <person name="Valle G."/>
        </authorList>
    </citation>
    <scope>NUCLEOTIDE SEQUENCE [LARGE SCALE GENOMIC DNA]</scope>
    <source>
        <strain>ATCC BAA-1253 / SS9</strain>
    </source>
</reference>
<sequence length="314" mass="34124">MSKPLRIVFAGTPDFAARHLAALLSSQHEVIAVYTQPDRPAGRGKKLTASPVKNIALENDLPVYQPASLRNEDAQQELAALKADIMVVVAYGLLLPKFVLDTPKLGCINVHGSILPRWRGAAPIQRSIWAGDEETGVTIMQMDEGLDTGDMLTIATLPIEPTDTSATMYDKLAGLGPNALIDCLSEISAGTAIAEKQNDELANYAKKLNKEEAKIDWAMEATAIERCIRAFNPWPMSYFAVAEQNVKVWHAVVEAENQGKAPGTILSADKQGITVATGKGALRLIELQPPGKKAMKAQDILNSRREWFELGTQL</sequence>